<accession>Q1PDX5</accession>
<accession>Q9LYH9</accession>
<comment type="subcellular location">
    <subcellularLocation>
        <location evidence="2">Secreted</location>
    </subcellularLocation>
</comment>
<comment type="similarity">
    <text evidence="8">Belongs to the peptidase S8 family.</text>
</comment>
<comment type="sequence caution" evidence="8">
    <conflict type="erroneous gene model prediction">
        <sequence resource="EMBL-CDS" id="CAB87667"/>
    </conflict>
</comment>
<evidence type="ECO:0000250" key="1">
    <source>
        <dbReference type="UniProtKB" id="Q39547"/>
    </source>
</evidence>
<evidence type="ECO:0000250" key="2">
    <source>
        <dbReference type="UniProtKB" id="Q84WS0"/>
    </source>
</evidence>
<evidence type="ECO:0000255" key="3"/>
<evidence type="ECO:0000255" key="4">
    <source>
        <dbReference type="PROSITE-ProRule" id="PRU00498"/>
    </source>
</evidence>
<evidence type="ECO:0000255" key="5">
    <source>
        <dbReference type="PROSITE-ProRule" id="PRU01240"/>
    </source>
</evidence>
<evidence type="ECO:0000255" key="6">
    <source>
        <dbReference type="PROSITE-ProRule" id="PRU10082"/>
    </source>
</evidence>
<evidence type="ECO:0000303" key="7">
    <source>
    </source>
</evidence>
<evidence type="ECO:0000305" key="8"/>
<evidence type="ECO:0000312" key="9">
    <source>
        <dbReference type="Araport" id="AT5G11940"/>
    </source>
</evidence>
<evidence type="ECO:0000312" key="10">
    <source>
        <dbReference type="EMBL" id="ABE66153.1"/>
    </source>
</evidence>
<evidence type="ECO:0000312" key="11">
    <source>
        <dbReference type="EMBL" id="CAB87667.1"/>
    </source>
</evidence>
<protein>
    <recommendedName>
        <fullName evidence="7">Subtilisin-like protease SBT3.11</fullName>
        <ecNumber evidence="6">3.4.21.-</ecNumber>
    </recommendedName>
    <alternativeName>
        <fullName evidence="7">Subtilase subfamily 3 member 11</fullName>
        <shortName evidence="7">AtSBT3.11</shortName>
    </alternativeName>
</protein>
<dbReference type="EC" id="3.4.21.-" evidence="6"/>
<dbReference type="EMBL" id="AL163812">
    <property type="protein sequence ID" value="CAB87667.1"/>
    <property type="status" value="ALT_SEQ"/>
    <property type="molecule type" value="Genomic_DNA"/>
</dbReference>
<dbReference type="EMBL" id="CP002688">
    <property type="protein sequence ID" value="AED91742.1"/>
    <property type="molecule type" value="Genomic_DNA"/>
</dbReference>
<dbReference type="EMBL" id="DQ446943">
    <property type="protein sequence ID" value="ABE66153.1"/>
    <property type="molecule type" value="mRNA"/>
</dbReference>
<dbReference type="PIR" id="T48553">
    <property type="entry name" value="T48553"/>
</dbReference>
<dbReference type="RefSeq" id="NP_568255.1">
    <property type="nucleotide sequence ID" value="NM_121232.1"/>
</dbReference>
<dbReference type="SMR" id="Q1PDX5"/>
<dbReference type="FunCoup" id="Q1PDX5">
    <property type="interactions" value="1"/>
</dbReference>
<dbReference type="STRING" id="3702.Q1PDX5"/>
<dbReference type="MEROPS" id="S08.A37"/>
<dbReference type="GlyCosmos" id="Q1PDX5">
    <property type="glycosylation" value="3 sites, No reported glycans"/>
</dbReference>
<dbReference type="GlyGen" id="Q1PDX5">
    <property type="glycosylation" value="3 sites"/>
</dbReference>
<dbReference type="PaxDb" id="3702-AT5G11940.1"/>
<dbReference type="ProteomicsDB" id="232797"/>
<dbReference type="EnsemblPlants" id="AT5G11940.1">
    <property type="protein sequence ID" value="AT5G11940.1"/>
    <property type="gene ID" value="AT5G11940"/>
</dbReference>
<dbReference type="GeneID" id="831067"/>
<dbReference type="Gramene" id="AT5G11940.1">
    <property type="protein sequence ID" value="AT5G11940.1"/>
    <property type="gene ID" value="AT5G11940"/>
</dbReference>
<dbReference type="KEGG" id="ath:AT5G11940"/>
<dbReference type="Araport" id="AT5G11940"/>
<dbReference type="TAIR" id="AT5G11940"/>
<dbReference type="eggNOG" id="ENOG502QSF0">
    <property type="taxonomic scope" value="Eukaryota"/>
</dbReference>
<dbReference type="HOGENOM" id="CLU_000625_4_2_1"/>
<dbReference type="InParanoid" id="Q1PDX5"/>
<dbReference type="OMA" id="YKVVWDT"/>
<dbReference type="PhylomeDB" id="Q1PDX5"/>
<dbReference type="PRO" id="PR:Q1PDX5"/>
<dbReference type="Proteomes" id="UP000006548">
    <property type="component" value="Chromosome 5"/>
</dbReference>
<dbReference type="ExpressionAtlas" id="Q1PDX5">
    <property type="expression patterns" value="baseline and differential"/>
</dbReference>
<dbReference type="GO" id="GO:0005576">
    <property type="term" value="C:extracellular region"/>
    <property type="evidence" value="ECO:0007669"/>
    <property type="project" value="UniProtKB-SubCell"/>
</dbReference>
<dbReference type="GO" id="GO:0004252">
    <property type="term" value="F:serine-type endopeptidase activity"/>
    <property type="evidence" value="ECO:0007669"/>
    <property type="project" value="InterPro"/>
</dbReference>
<dbReference type="GO" id="GO:0006508">
    <property type="term" value="P:proteolysis"/>
    <property type="evidence" value="ECO:0007669"/>
    <property type="project" value="UniProtKB-KW"/>
</dbReference>
<dbReference type="CDD" id="cd02120">
    <property type="entry name" value="PA_subtilisin_like"/>
    <property type="match status" value="1"/>
</dbReference>
<dbReference type="CDD" id="cd04852">
    <property type="entry name" value="Peptidases_S8_3"/>
    <property type="match status" value="1"/>
</dbReference>
<dbReference type="FunFam" id="2.60.40.2310:FF:000001">
    <property type="entry name" value="Subtilisin-like protease SBT1.5"/>
    <property type="match status" value="1"/>
</dbReference>
<dbReference type="FunFam" id="3.40.50.200:FF:000006">
    <property type="entry name" value="Subtilisin-like protease SBT1.5"/>
    <property type="match status" value="1"/>
</dbReference>
<dbReference type="FunFam" id="3.30.70.80:FF:000002">
    <property type="entry name" value="Subtilisin-like protease SBT5.3"/>
    <property type="match status" value="1"/>
</dbReference>
<dbReference type="Gene3D" id="2.60.40.2310">
    <property type="match status" value="1"/>
</dbReference>
<dbReference type="Gene3D" id="3.50.30.30">
    <property type="match status" value="1"/>
</dbReference>
<dbReference type="Gene3D" id="3.30.70.80">
    <property type="entry name" value="Peptidase S8 propeptide/proteinase inhibitor I9"/>
    <property type="match status" value="1"/>
</dbReference>
<dbReference type="Gene3D" id="3.40.50.200">
    <property type="entry name" value="Peptidase S8/S53 domain"/>
    <property type="match status" value="1"/>
</dbReference>
<dbReference type="InterPro" id="IPR000209">
    <property type="entry name" value="Peptidase_S8/S53_dom"/>
</dbReference>
<dbReference type="InterPro" id="IPR036852">
    <property type="entry name" value="Peptidase_S8/S53_dom_sf"/>
</dbReference>
<dbReference type="InterPro" id="IPR022398">
    <property type="entry name" value="Peptidase_S8_His-AS"/>
</dbReference>
<dbReference type="InterPro" id="IPR023828">
    <property type="entry name" value="Peptidase_S8_Ser-AS"/>
</dbReference>
<dbReference type="InterPro" id="IPR015500">
    <property type="entry name" value="Peptidase_S8_subtilisin-rel"/>
</dbReference>
<dbReference type="InterPro" id="IPR034197">
    <property type="entry name" value="Peptidases_S8_3"/>
</dbReference>
<dbReference type="InterPro" id="IPR010259">
    <property type="entry name" value="S8pro/Inhibitor_I9"/>
</dbReference>
<dbReference type="InterPro" id="IPR037045">
    <property type="entry name" value="S8pro/Inhibitor_I9_sf"/>
</dbReference>
<dbReference type="InterPro" id="IPR045051">
    <property type="entry name" value="SBT"/>
</dbReference>
<dbReference type="InterPro" id="IPR041469">
    <property type="entry name" value="Subtilisin-like_FN3"/>
</dbReference>
<dbReference type="PANTHER" id="PTHR10795">
    <property type="entry name" value="PROPROTEIN CONVERTASE SUBTILISIN/KEXIN"/>
    <property type="match status" value="1"/>
</dbReference>
<dbReference type="Pfam" id="PF17766">
    <property type="entry name" value="fn3_6"/>
    <property type="match status" value="1"/>
</dbReference>
<dbReference type="Pfam" id="PF05922">
    <property type="entry name" value="Inhibitor_I9"/>
    <property type="match status" value="1"/>
</dbReference>
<dbReference type="Pfam" id="PF00082">
    <property type="entry name" value="Peptidase_S8"/>
    <property type="match status" value="1"/>
</dbReference>
<dbReference type="PRINTS" id="PR00723">
    <property type="entry name" value="SUBTILISIN"/>
</dbReference>
<dbReference type="SUPFAM" id="SSF52743">
    <property type="entry name" value="Subtilisin-like"/>
    <property type="match status" value="1"/>
</dbReference>
<dbReference type="PROSITE" id="PS51892">
    <property type="entry name" value="SUBTILASE"/>
    <property type="match status" value="1"/>
</dbReference>
<dbReference type="PROSITE" id="PS00137">
    <property type="entry name" value="SUBTILASE_HIS"/>
    <property type="match status" value="1"/>
</dbReference>
<dbReference type="PROSITE" id="PS00138">
    <property type="entry name" value="SUBTILASE_SER"/>
    <property type="match status" value="1"/>
</dbReference>
<name>SBT3B_ARATH</name>
<organism evidence="10">
    <name type="scientific">Arabidopsis thaliana</name>
    <name type="common">Mouse-ear cress</name>
    <dbReference type="NCBI Taxonomy" id="3702"/>
    <lineage>
        <taxon>Eukaryota</taxon>
        <taxon>Viridiplantae</taxon>
        <taxon>Streptophyta</taxon>
        <taxon>Embryophyta</taxon>
        <taxon>Tracheophyta</taxon>
        <taxon>Spermatophyta</taxon>
        <taxon>Magnoliopsida</taxon>
        <taxon>eudicotyledons</taxon>
        <taxon>Gunneridae</taxon>
        <taxon>Pentapetalae</taxon>
        <taxon>rosids</taxon>
        <taxon>malvids</taxon>
        <taxon>Brassicales</taxon>
        <taxon>Brassicaceae</taxon>
        <taxon>Camelineae</taxon>
        <taxon>Arabidopsis</taxon>
    </lineage>
</organism>
<proteinExistence type="evidence at transcript level"/>
<gene>
    <name evidence="7" type="primary">SBT3.11</name>
    <name evidence="9" type="ordered locus">At5g11940</name>
    <name evidence="11" type="ORF">F14F18.110</name>
</gene>
<sequence>MMSSIVSWWFFWVISAVCILKVEFNIVEGGAYEETKVHIVYLGEKEHNDPELVTSSHLRMLESLLGSKKDASESIVHSYRNGFSGFAAHLTDSQAEQISEHPDVVQVTPNTFYELQTTRTFDYLGLSHSTPKGLLHEAKMGEDIIIGVLDSGVWPESQSFNDKGLGPIPKRWKGMCVDGEDFDSKKHCNKKLIGARYYMDSLFRRNKTDSGIPDTEYMSARESLPHGTHVASTAGGSFVSNVSDNGFGVGTIRGGAPRARIAVYKVCWQRVDRTCASADIIKAMDDAIADGVDLITISIGRPNPVLTEVDVYNQISYGAFHAVAKGIPVLSAGGNFGPGAYTVQNIAPWIITVAATTLDRWYPTPLTLGNNVTLMARTPYKGNEIQGDLMFVYSPDEMTSAAKGKVVLTFTTGSEESQAGYVTKLFQVEAKSVIIAAKRNDVIKVSEGLPIIMVDYEHGSTIWKYLSITRMPTIKISSAIALNGRLVATKVADFSGRGPNSISPYVLKPDVAAPGVAIVAASTPESMGTEEGFAIQSGTSMSTPVVAGLVALLRAVHPDWSPAALKSALITTASTTDPYGEPIFSEGMTRKLADPFDFGGGLVNPNKAADPGLVYDISAEDYRLFLCASHYDEKQITKISKTHTPYRCPSPKPSMLDLNLPSITIPFLKEDVTLTRTVTNVGPVDSVYKLIVEPPLGVKISVTPNTLLFNSNVKILSYKVTVSTTHKSNSIYYFGSLTWTDGSHKVTIPLSVRTQMLMYFDQ</sequence>
<keyword id="KW-0068">Autocatalytic cleavage</keyword>
<keyword id="KW-0325">Glycoprotein</keyword>
<keyword id="KW-0378">Hydrolase</keyword>
<keyword id="KW-0645">Protease</keyword>
<keyword id="KW-1185">Reference proteome</keyword>
<keyword id="KW-0964">Secreted</keyword>
<keyword id="KW-0720">Serine protease</keyword>
<keyword id="KW-0732">Signal</keyword>
<keyword id="KW-0865">Zymogen</keyword>
<feature type="signal peptide" evidence="3">
    <location>
        <begin position="1"/>
        <end position="16"/>
    </location>
</feature>
<feature type="propeptide" id="PRO_0000435206" description="Activation peptide" evidence="1">
    <location>
        <begin position="17"/>
        <end position="116"/>
    </location>
</feature>
<feature type="chain" id="PRO_5004195439" description="Subtilisin-like protease SBT3.11">
    <location>
        <begin position="117"/>
        <end status="unknown"/>
    </location>
</feature>
<feature type="propeptide" id="PRO_0000435207" evidence="1">
    <location>
        <begin status="unknown"/>
        <end position="762"/>
    </location>
</feature>
<feature type="domain" description="Inhibitor I9" evidence="3">
    <location>
        <begin position="37"/>
        <end position="115"/>
    </location>
</feature>
<feature type="domain" description="Peptidase S8" evidence="5">
    <location>
        <begin position="120"/>
        <end position="609"/>
    </location>
</feature>
<feature type="active site" description="Charge relay system" evidence="5">
    <location>
        <position position="150"/>
    </location>
</feature>
<feature type="active site" description="Charge relay system" evidence="5">
    <location>
        <position position="226"/>
    </location>
</feature>
<feature type="active site" description="Charge relay system" evidence="5">
    <location>
        <position position="540"/>
    </location>
</feature>
<feature type="glycosylation site" description="N-linked (GlcNAc...) asparagine" evidence="4">
    <location>
        <position position="206"/>
    </location>
</feature>
<feature type="glycosylation site" description="N-linked (GlcNAc...) asparagine" evidence="4">
    <location>
        <position position="241"/>
    </location>
</feature>
<feature type="glycosylation site" description="N-linked (GlcNAc...) asparagine" evidence="4">
    <location>
        <position position="371"/>
    </location>
</feature>
<reference key="1">
    <citation type="journal article" date="2000" name="Nature">
        <title>Sequence and analysis of chromosome 5 of the plant Arabidopsis thaliana.</title>
        <authorList>
            <person name="Tabata S."/>
            <person name="Kaneko T."/>
            <person name="Nakamura Y."/>
            <person name="Kotani H."/>
            <person name="Kato T."/>
            <person name="Asamizu E."/>
            <person name="Miyajima N."/>
            <person name="Sasamoto S."/>
            <person name="Kimura T."/>
            <person name="Hosouchi T."/>
            <person name="Kawashima K."/>
            <person name="Kohara M."/>
            <person name="Matsumoto M."/>
            <person name="Matsuno A."/>
            <person name="Muraki A."/>
            <person name="Nakayama S."/>
            <person name="Nakazaki N."/>
            <person name="Naruo K."/>
            <person name="Okumura S."/>
            <person name="Shinpo S."/>
            <person name="Takeuchi C."/>
            <person name="Wada T."/>
            <person name="Watanabe A."/>
            <person name="Yamada M."/>
            <person name="Yasuda M."/>
            <person name="Sato S."/>
            <person name="de la Bastide M."/>
            <person name="Huang E."/>
            <person name="Spiegel L."/>
            <person name="Gnoj L."/>
            <person name="O'Shaughnessy A."/>
            <person name="Preston R."/>
            <person name="Habermann K."/>
            <person name="Murray J."/>
            <person name="Johnson D."/>
            <person name="Rohlfing T."/>
            <person name="Nelson J."/>
            <person name="Stoneking T."/>
            <person name="Pepin K."/>
            <person name="Spieth J."/>
            <person name="Sekhon M."/>
            <person name="Armstrong J."/>
            <person name="Becker M."/>
            <person name="Belter E."/>
            <person name="Cordum H."/>
            <person name="Cordes M."/>
            <person name="Courtney L."/>
            <person name="Courtney W."/>
            <person name="Dante M."/>
            <person name="Du H."/>
            <person name="Edwards J."/>
            <person name="Fryman J."/>
            <person name="Haakensen B."/>
            <person name="Lamar E."/>
            <person name="Latreille P."/>
            <person name="Leonard S."/>
            <person name="Meyer R."/>
            <person name="Mulvaney E."/>
            <person name="Ozersky P."/>
            <person name="Riley A."/>
            <person name="Strowmatt C."/>
            <person name="Wagner-McPherson C."/>
            <person name="Wollam A."/>
            <person name="Yoakum M."/>
            <person name="Bell M."/>
            <person name="Dedhia N."/>
            <person name="Parnell L."/>
            <person name="Shah R."/>
            <person name="Rodriguez M."/>
            <person name="Hoon See L."/>
            <person name="Vil D."/>
            <person name="Baker J."/>
            <person name="Kirchoff K."/>
            <person name="Toth K."/>
            <person name="King L."/>
            <person name="Bahret A."/>
            <person name="Miller B."/>
            <person name="Marra M.A."/>
            <person name="Martienssen R."/>
            <person name="McCombie W.R."/>
            <person name="Wilson R.K."/>
            <person name="Murphy G."/>
            <person name="Bancroft I."/>
            <person name="Volckaert G."/>
            <person name="Wambutt R."/>
            <person name="Duesterhoeft A."/>
            <person name="Stiekema W."/>
            <person name="Pohl T."/>
            <person name="Entian K.-D."/>
            <person name="Terryn N."/>
            <person name="Hartley N."/>
            <person name="Bent E."/>
            <person name="Johnson S."/>
            <person name="Langham S.-A."/>
            <person name="McCullagh B."/>
            <person name="Robben J."/>
            <person name="Grymonprez B."/>
            <person name="Zimmermann W."/>
            <person name="Ramsperger U."/>
            <person name="Wedler H."/>
            <person name="Balke K."/>
            <person name="Wedler E."/>
            <person name="Peters S."/>
            <person name="van Staveren M."/>
            <person name="Dirkse W."/>
            <person name="Mooijman P."/>
            <person name="Klein Lankhorst R."/>
            <person name="Weitzenegger T."/>
            <person name="Bothe G."/>
            <person name="Rose M."/>
            <person name="Hauf J."/>
            <person name="Berneiser S."/>
            <person name="Hempel S."/>
            <person name="Feldpausch M."/>
            <person name="Lamberth S."/>
            <person name="Villarroel R."/>
            <person name="Gielen J."/>
            <person name="Ardiles W."/>
            <person name="Bents O."/>
            <person name="Lemcke K."/>
            <person name="Kolesov G."/>
            <person name="Mayer K.F.X."/>
            <person name="Rudd S."/>
            <person name="Schoof H."/>
            <person name="Schueller C."/>
            <person name="Zaccaria P."/>
            <person name="Mewes H.-W."/>
            <person name="Bevan M."/>
            <person name="Fransz P.F."/>
        </authorList>
    </citation>
    <scope>NUCLEOTIDE SEQUENCE [LARGE SCALE GENOMIC DNA]</scope>
    <source>
        <strain>cv. Columbia</strain>
    </source>
</reference>
<reference key="2">
    <citation type="journal article" date="2017" name="Plant J.">
        <title>Araport11: a complete reannotation of the Arabidopsis thaliana reference genome.</title>
        <authorList>
            <person name="Cheng C.Y."/>
            <person name="Krishnakumar V."/>
            <person name="Chan A.P."/>
            <person name="Thibaud-Nissen F."/>
            <person name="Schobel S."/>
            <person name="Town C.D."/>
        </authorList>
    </citation>
    <scope>GENOME REANNOTATION</scope>
    <source>
        <strain>cv. Columbia</strain>
    </source>
</reference>
<reference key="3">
    <citation type="journal article" date="2006" name="Plant Biotechnol. J.">
        <title>Simultaneous high-throughput recombinational cloning of open reading frames in closed and open configurations.</title>
        <authorList>
            <person name="Underwood B.A."/>
            <person name="Vanderhaeghen R."/>
            <person name="Whitford R."/>
            <person name="Town C.D."/>
            <person name="Hilson P."/>
        </authorList>
    </citation>
    <scope>NUCLEOTIDE SEQUENCE [LARGE SCALE MRNA]</scope>
    <source>
        <strain>cv. Columbia</strain>
    </source>
</reference>
<reference key="4">
    <citation type="journal article" date="2005" name="PLoS Comput. Biol.">
        <title>Inferring hypotheses on functional relationships of genes: Analysis of the Arabidopsis thaliana subtilase gene family.</title>
        <authorList>
            <person name="Rautengarten C."/>
            <person name="Steinhauser D."/>
            <person name="Bussis D."/>
            <person name="Stintzi A."/>
            <person name="Schaller A."/>
            <person name="Kopka J."/>
            <person name="Altmann T."/>
        </authorList>
    </citation>
    <scope>GENE FAMILY</scope>
    <scope>NOMENCLATURE</scope>
</reference>